<gene>
    <name type="ordered locus">MAP_4191c</name>
</gene>
<name>Y4191_MYCPA</name>
<keyword id="KW-0489">Methyltransferase</keyword>
<keyword id="KW-1185">Reference proteome</keyword>
<keyword id="KW-0949">S-adenosyl-L-methionine</keyword>
<keyword id="KW-0808">Transferase</keyword>
<sequence length="314" mass="33861">MTSTRYEGDTWDLASSVGVTATMVAAARAMATRADNPLINDLFAEPLVKAVGVDLLSRLAGGELDPAELNDVHDGAAGSAGAMSRMADNMAVRTKFFDEFFLNATKAGIAQVVILASGLDARAYRLAWPAGTVVYEVDQPQVIDFKTTALAQLGAAPTAERRVVAVDLRDDWPAALRAAGFDPARPTAWSAEGLLGYLPPEAQDRLLDTITELSAPGSRLATESAPNPAPGEEEKLKERMQAISQRWRAHGFDLDMAGLVYFGERNEAAPYLAGHGWRLNSVTIRDLFAANGLDPLDDDDTRMGEMLYTWGIYE</sequence>
<evidence type="ECO:0000250" key="1"/>
<evidence type="ECO:0000305" key="2"/>
<comment type="function">
    <text evidence="1">Exhibits S-adenosyl-L-methionine-dependent methyltransferase activity.</text>
</comment>
<comment type="similarity">
    <text evidence="2">Belongs to the UPF0677 family.</text>
</comment>
<comment type="sequence caution" evidence="2">
    <conflict type="erroneous initiation">
        <sequence resource="EMBL-CDS" id="AAS06741"/>
    </conflict>
</comment>
<reference key="1">
    <citation type="journal article" date="2005" name="Proc. Natl. Acad. Sci. U.S.A.">
        <title>The complete genome sequence of Mycobacterium avium subspecies paratuberculosis.</title>
        <authorList>
            <person name="Li L."/>
            <person name="Bannantine J.P."/>
            <person name="Zhang Q."/>
            <person name="Amonsin A."/>
            <person name="May B.J."/>
            <person name="Alt D."/>
            <person name="Banerji N."/>
            <person name="Kanjilal S."/>
            <person name="Kapur V."/>
        </authorList>
    </citation>
    <scope>NUCLEOTIDE SEQUENCE [LARGE SCALE GENOMIC DNA]</scope>
    <source>
        <strain>ATCC BAA-968 / K-10</strain>
    </source>
</reference>
<dbReference type="EC" id="2.1.1.-"/>
<dbReference type="EMBL" id="AE016958">
    <property type="protein sequence ID" value="AAS06741.1"/>
    <property type="status" value="ALT_INIT"/>
    <property type="molecule type" value="Genomic_DNA"/>
</dbReference>
<dbReference type="RefSeq" id="WP_015632742.1">
    <property type="nucleotide sequence ID" value="NZ_CP106873.1"/>
</dbReference>
<dbReference type="SMR" id="Q73S85"/>
<dbReference type="STRING" id="262316.MAP_4191c"/>
<dbReference type="KEGG" id="mpa:MAP_4191c"/>
<dbReference type="PATRIC" id="fig|262316.17.peg.4463"/>
<dbReference type="eggNOG" id="COG3315">
    <property type="taxonomic scope" value="Bacteria"/>
</dbReference>
<dbReference type="HOGENOM" id="CLU_056160_2_1_11"/>
<dbReference type="Proteomes" id="UP000000580">
    <property type="component" value="Chromosome"/>
</dbReference>
<dbReference type="GO" id="GO:0008168">
    <property type="term" value="F:methyltransferase activity"/>
    <property type="evidence" value="ECO:0007669"/>
    <property type="project" value="UniProtKB-KW"/>
</dbReference>
<dbReference type="GO" id="GO:0032259">
    <property type="term" value="P:methylation"/>
    <property type="evidence" value="ECO:0007669"/>
    <property type="project" value="UniProtKB-KW"/>
</dbReference>
<dbReference type="FunFam" id="3.40.50.150:FF:000152">
    <property type="entry name" value="S-adenosyl-L-methionine-dependent methyltransferase"/>
    <property type="match status" value="1"/>
</dbReference>
<dbReference type="Gene3D" id="3.40.50.150">
    <property type="entry name" value="Vaccinia Virus protein VP39"/>
    <property type="match status" value="1"/>
</dbReference>
<dbReference type="InterPro" id="IPR007213">
    <property type="entry name" value="Ppm1/Ppm2/Tcmp"/>
</dbReference>
<dbReference type="InterPro" id="IPR029063">
    <property type="entry name" value="SAM-dependent_MTases_sf"/>
</dbReference>
<dbReference type="InterPro" id="IPR011610">
    <property type="entry name" value="SAM_mthyl_Trfase_ML2640-like"/>
</dbReference>
<dbReference type="NCBIfam" id="TIGR00027">
    <property type="entry name" value="mthyl_TIGR00027"/>
    <property type="match status" value="1"/>
</dbReference>
<dbReference type="PANTHER" id="PTHR43619">
    <property type="entry name" value="S-ADENOSYL-L-METHIONINE-DEPENDENT METHYLTRANSFERASE YKTD-RELATED"/>
    <property type="match status" value="1"/>
</dbReference>
<dbReference type="PANTHER" id="PTHR43619:SF2">
    <property type="entry name" value="S-ADENOSYL-L-METHIONINE-DEPENDENT METHYLTRANSFERASES SUPERFAMILY PROTEIN"/>
    <property type="match status" value="1"/>
</dbReference>
<dbReference type="Pfam" id="PF04072">
    <property type="entry name" value="LCM"/>
    <property type="match status" value="1"/>
</dbReference>
<dbReference type="SUPFAM" id="SSF53335">
    <property type="entry name" value="S-adenosyl-L-methionine-dependent methyltransferases"/>
    <property type="match status" value="1"/>
</dbReference>
<protein>
    <recommendedName>
        <fullName>Putative S-adenosyl-L-methionine-dependent methyltransferase MAP_4191c</fullName>
        <ecNumber>2.1.1.-</ecNumber>
    </recommendedName>
</protein>
<organism>
    <name type="scientific">Mycolicibacterium paratuberculosis (strain ATCC BAA-968 / K-10)</name>
    <name type="common">Mycobacterium paratuberculosis</name>
    <dbReference type="NCBI Taxonomy" id="262316"/>
    <lineage>
        <taxon>Bacteria</taxon>
        <taxon>Bacillati</taxon>
        <taxon>Actinomycetota</taxon>
        <taxon>Actinomycetes</taxon>
        <taxon>Mycobacteriales</taxon>
        <taxon>Mycobacteriaceae</taxon>
        <taxon>Mycobacterium</taxon>
        <taxon>Mycobacterium avium complex (MAC)</taxon>
    </lineage>
</organism>
<feature type="chain" id="PRO_0000361189" description="Putative S-adenosyl-L-methionine-dependent methyltransferase MAP_4191c">
    <location>
        <begin position="1"/>
        <end position="314"/>
    </location>
</feature>
<feature type="binding site" evidence="1">
    <location>
        <position position="138"/>
    </location>
    <ligand>
        <name>S-adenosyl-L-methionine</name>
        <dbReference type="ChEBI" id="CHEBI:59789"/>
    </ligand>
</feature>
<feature type="binding site" evidence="1">
    <location>
        <begin position="167"/>
        <end position="168"/>
    </location>
    <ligand>
        <name>S-adenosyl-L-methionine</name>
        <dbReference type="ChEBI" id="CHEBI:59789"/>
    </ligand>
</feature>
<accession>Q73S85</accession>
<proteinExistence type="inferred from homology"/>